<dbReference type="EC" id="3.5.1.18" evidence="1"/>
<dbReference type="EMBL" id="CU468135">
    <property type="protein sequence ID" value="CAO96118.1"/>
    <property type="molecule type" value="Genomic_DNA"/>
</dbReference>
<dbReference type="RefSeq" id="WP_012440818.1">
    <property type="nucleotide sequence ID" value="NC_010694.1"/>
</dbReference>
<dbReference type="SMR" id="B2VE50"/>
<dbReference type="STRING" id="465817.ETA_10720"/>
<dbReference type="MEROPS" id="M20.010"/>
<dbReference type="KEGG" id="eta:ETA_10720"/>
<dbReference type="eggNOG" id="COG0624">
    <property type="taxonomic scope" value="Bacteria"/>
</dbReference>
<dbReference type="HOGENOM" id="CLU_021802_4_0_6"/>
<dbReference type="OrthoDB" id="9809784at2"/>
<dbReference type="UniPathway" id="UPA00034">
    <property type="reaction ID" value="UER00021"/>
</dbReference>
<dbReference type="Proteomes" id="UP000001726">
    <property type="component" value="Chromosome"/>
</dbReference>
<dbReference type="GO" id="GO:0008777">
    <property type="term" value="F:acetylornithine deacetylase activity"/>
    <property type="evidence" value="ECO:0007669"/>
    <property type="project" value="TreeGrafter"/>
</dbReference>
<dbReference type="GO" id="GO:0050897">
    <property type="term" value="F:cobalt ion binding"/>
    <property type="evidence" value="ECO:0007669"/>
    <property type="project" value="UniProtKB-UniRule"/>
</dbReference>
<dbReference type="GO" id="GO:0009014">
    <property type="term" value="F:succinyl-diaminopimelate desuccinylase activity"/>
    <property type="evidence" value="ECO:0007669"/>
    <property type="project" value="UniProtKB-UniRule"/>
</dbReference>
<dbReference type="GO" id="GO:0008270">
    <property type="term" value="F:zinc ion binding"/>
    <property type="evidence" value="ECO:0007669"/>
    <property type="project" value="UniProtKB-UniRule"/>
</dbReference>
<dbReference type="GO" id="GO:0019877">
    <property type="term" value="P:diaminopimelate biosynthetic process"/>
    <property type="evidence" value="ECO:0007669"/>
    <property type="project" value="UniProtKB-UniRule"/>
</dbReference>
<dbReference type="GO" id="GO:0006526">
    <property type="term" value="P:L-arginine biosynthetic process"/>
    <property type="evidence" value="ECO:0007669"/>
    <property type="project" value="TreeGrafter"/>
</dbReference>
<dbReference type="GO" id="GO:0009089">
    <property type="term" value="P:lysine biosynthetic process via diaminopimelate"/>
    <property type="evidence" value="ECO:0007669"/>
    <property type="project" value="UniProtKB-UniRule"/>
</dbReference>
<dbReference type="CDD" id="cd03891">
    <property type="entry name" value="M20_DapE_proteobac"/>
    <property type="match status" value="1"/>
</dbReference>
<dbReference type="FunFam" id="3.30.70.360:FF:000011">
    <property type="entry name" value="Succinyl-diaminopimelate desuccinylase"/>
    <property type="match status" value="1"/>
</dbReference>
<dbReference type="FunFam" id="3.40.630.10:FF:000005">
    <property type="entry name" value="Succinyl-diaminopimelate desuccinylase"/>
    <property type="match status" value="1"/>
</dbReference>
<dbReference type="FunFam" id="3.40.630.10:FF:000010">
    <property type="entry name" value="Succinyl-diaminopimelate desuccinylase"/>
    <property type="match status" value="1"/>
</dbReference>
<dbReference type="Gene3D" id="3.40.630.10">
    <property type="entry name" value="Zn peptidases"/>
    <property type="match status" value="2"/>
</dbReference>
<dbReference type="HAMAP" id="MF_01690">
    <property type="entry name" value="DapE"/>
    <property type="match status" value="1"/>
</dbReference>
<dbReference type="InterPro" id="IPR001261">
    <property type="entry name" value="ArgE/DapE_CS"/>
</dbReference>
<dbReference type="InterPro" id="IPR036264">
    <property type="entry name" value="Bact_exopeptidase_dim_dom"/>
</dbReference>
<dbReference type="InterPro" id="IPR005941">
    <property type="entry name" value="DapE_proteobac"/>
</dbReference>
<dbReference type="InterPro" id="IPR002933">
    <property type="entry name" value="Peptidase_M20"/>
</dbReference>
<dbReference type="InterPro" id="IPR011650">
    <property type="entry name" value="Peptidase_M20_dimer"/>
</dbReference>
<dbReference type="InterPro" id="IPR050072">
    <property type="entry name" value="Peptidase_M20A"/>
</dbReference>
<dbReference type="NCBIfam" id="TIGR01246">
    <property type="entry name" value="dapE_proteo"/>
    <property type="match status" value="1"/>
</dbReference>
<dbReference type="NCBIfam" id="NF009557">
    <property type="entry name" value="PRK13009.1"/>
    <property type="match status" value="1"/>
</dbReference>
<dbReference type="PANTHER" id="PTHR43808">
    <property type="entry name" value="ACETYLORNITHINE DEACETYLASE"/>
    <property type="match status" value="1"/>
</dbReference>
<dbReference type="PANTHER" id="PTHR43808:SF31">
    <property type="entry name" value="N-ACETYL-L-CITRULLINE DEACETYLASE"/>
    <property type="match status" value="1"/>
</dbReference>
<dbReference type="Pfam" id="PF07687">
    <property type="entry name" value="M20_dimer"/>
    <property type="match status" value="1"/>
</dbReference>
<dbReference type="Pfam" id="PF01546">
    <property type="entry name" value="Peptidase_M20"/>
    <property type="match status" value="1"/>
</dbReference>
<dbReference type="SUPFAM" id="SSF55031">
    <property type="entry name" value="Bacterial exopeptidase dimerisation domain"/>
    <property type="match status" value="1"/>
</dbReference>
<dbReference type="SUPFAM" id="SSF53187">
    <property type="entry name" value="Zn-dependent exopeptidases"/>
    <property type="match status" value="1"/>
</dbReference>
<dbReference type="PROSITE" id="PS00758">
    <property type="entry name" value="ARGE_DAPE_CPG2_1"/>
    <property type="match status" value="1"/>
</dbReference>
<dbReference type="PROSITE" id="PS00759">
    <property type="entry name" value="ARGE_DAPE_CPG2_2"/>
    <property type="match status" value="1"/>
</dbReference>
<reference key="1">
    <citation type="journal article" date="2008" name="Environ. Microbiol.">
        <title>The genome of Erwinia tasmaniensis strain Et1/99, a non-pathogenic bacterium in the genus Erwinia.</title>
        <authorList>
            <person name="Kube M."/>
            <person name="Migdoll A.M."/>
            <person name="Mueller I."/>
            <person name="Kuhl H."/>
            <person name="Beck A."/>
            <person name="Reinhardt R."/>
            <person name="Geider K."/>
        </authorList>
    </citation>
    <scope>NUCLEOTIDE SEQUENCE [LARGE SCALE GENOMIC DNA]</scope>
    <source>
        <strain>DSM 17950 / CFBP 7177 / CIP 109463 / NCPPB 4357 / Et1/99</strain>
    </source>
</reference>
<protein>
    <recommendedName>
        <fullName evidence="1">Succinyl-diaminopimelate desuccinylase</fullName>
        <shortName evidence="1">SDAP desuccinylase</shortName>
        <ecNumber evidence="1">3.5.1.18</ecNumber>
    </recommendedName>
    <alternativeName>
        <fullName evidence="1">N-succinyl-LL-2,6-diaminoheptanedioate amidohydrolase</fullName>
    </alternativeName>
</protein>
<comment type="function">
    <text evidence="1">Catalyzes the hydrolysis of N-succinyl-L,L-diaminopimelic acid (SDAP), forming succinate and LL-2,6-diaminopimelate (DAP), an intermediate involved in the bacterial biosynthesis of lysine and meso-diaminopimelic acid, an essential component of bacterial cell walls.</text>
</comment>
<comment type="catalytic activity">
    <reaction evidence="1">
        <text>N-succinyl-(2S,6S)-2,6-diaminopimelate + H2O = (2S,6S)-2,6-diaminopimelate + succinate</text>
        <dbReference type="Rhea" id="RHEA:22608"/>
        <dbReference type="ChEBI" id="CHEBI:15377"/>
        <dbReference type="ChEBI" id="CHEBI:30031"/>
        <dbReference type="ChEBI" id="CHEBI:57609"/>
        <dbReference type="ChEBI" id="CHEBI:58087"/>
        <dbReference type="EC" id="3.5.1.18"/>
    </reaction>
</comment>
<comment type="cofactor">
    <cofactor evidence="1">
        <name>Zn(2+)</name>
        <dbReference type="ChEBI" id="CHEBI:29105"/>
    </cofactor>
    <cofactor evidence="1">
        <name>Co(2+)</name>
        <dbReference type="ChEBI" id="CHEBI:48828"/>
    </cofactor>
    <text evidence="1">Binds 2 Zn(2+) or Co(2+) ions per subunit.</text>
</comment>
<comment type="pathway">
    <text evidence="1">Amino-acid biosynthesis; L-lysine biosynthesis via DAP pathway; LL-2,6-diaminopimelate from (S)-tetrahydrodipicolinate (succinylase route): step 3/3.</text>
</comment>
<comment type="subunit">
    <text evidence="1">Homodimer.</text>
</comment>
<comment type="similarity">
    <text evidence="1">Belongs to the peptidase M20A family. DapE subfamily.</text>
</comment>
<organism>
    <name type="scientific">Erwinia tasmaniensis (strain DSM 17950 / CFBP 7177 / CIP 109463 / NCPPB 4357 / Et1/99)</name>
    <dbReference type="NCBI Taxonomy" id="465817"/>
    <lineage>
        <taxon>Bacteria</taxon>
        <taxon>Pseudomonadati</taxon>
        <taxon>Pseudomonadota</taxon>
        <taxon>Gammaproteobacteria</taxon>
        <taxon>Enterobacterales</taxon>
        <taxon>Erwiniaceae</taxon>
        <taxon>Erwinia</taxon>
    </lineage>
</organism>
<name>DAPE_ERWT9</name>
<proteinExistence type="inferred from homology"/>
<sequence length="375" mass="41177">MHCPVIELAQQLIRRPSLSPDDAGCQAILIARLQALGFTIETMNIGDTLNFWAWRGKGETLAFAGHTDVVPTGDVTRWNNPPFEPTIRDGMLYGRGAADMKGSLAAMVVAAERFVANYPQHEGRLAFLITSDEEASATNGTVKVVEALMARHERLDYCLVGEPSSTEVVGDVAKNGRRGSITANLTIHGVQGHVAYPHLADNPVHRAMPALNELVATEWDKGNEFFPPTSMQIANVQAGTGSNNVIPGDCFVQFNFRFSTELTDVMIQQKVQALLERHQLRYSIEWKLSGQPFLTSRGKLVDAVVNAVEHYNEIRPQLLTTGGTSDGRFIARMGAQVVELGPVNATIHKVDECVKAADLQLLSRMYQRIMEQLVA</sequence>
<evidence type="ECO:0000255" key="1">
    <source>
        <dbReference type="HAMAP-Rule" id="MF_01690"/>
    </source>
</evidence>
<accession>B2VE50</accession>
<feature type="chain" id="PRO_0000375551" description="Succinyl-diaminopimelate desuccinylase">
    <location>
        <begin position="1"/>
        <end position="375"/>
    </location>
</feature>
<feature type="active site" evidence="1">
    <location>
        <position position="68"/>
    </location>
</feature>
<feature type="active site" description="Proton acceptor" evidence="1">
    <location>
        <position position="133"/>
    </location>
</feature>
<feature type="binding site" evidence="1">
    <location>
        <position position="66"/>
    </location>
    <ligand>
        <name>Zn(2+)</name>
        <dbReference type="ChEBI" id="CHEBI:29105"/>
        <label>1</label>
    </ligand>
</feature>
<feature type="binding site" evidence="1">
    <location>
        <position position="99"/>
    </location>
    <ligand>
        <name>Zn(2+)</name>
        <dbReference type="ChEBI" id="CHEBI:29105"/>
        <label>1</label>
    </ligand>
</feature>
<feature type="binding site" evidence="1">
    <location>
        <position position="99"/>
    </location>
    <ligand>
        <name>Zn(2+)</name>
        <dbReference type="ChEBI" id="CHEBI:29105"/>
        <label>2</label>
    </ligand>
</feature>
<feature type="binding site" evidence="1">
    <location>
        <position position="134"/>
    </location>
    <ligand>
        <name>Zn(2+)</name>
        <dbReference type="ChEBI" id="CHEBI:29105"/>
        <label>2</label>
    </ligand>
</feature>
<feature type="binding site" evidence="1">
    <location>
        <position position="162"/>
    </location>
    <ligand>
        <name>Zn(2+)</name>
        <dbReference type="ChEBI" id="CHEBI:29105"/>
        <label>1</label>
    </ligand>
</feature>
<feature type="binding site" evidence="1">
    <location>
        <position position="348"/>
    </location>
    <ligand>
        <name>Zn(2+)</name>
        <dbReference type="ChEBI" id="CHEBI:29105"/>
        <label>2</label>
    </ligand>
</feature>
<keyword id="KW-0028">Amino-acid biosynthesis</keyword>
<keyword id="KW-0170">Cobalt</keyword>
<keyword id="KW-0220">Diaminopimelate biosynthesis</keyword>
<keyword id="KW-0378">Hydrolase</keyword>
<keyword id="KW-0457">Lysine biosynthesis</keyword>
<keyword id="KW-0479">Metal-binding</keyword>
<keyword id="KW-1185">Reference proteome</keyword>
<keyword id="KW-0862">Zinc</keyword>
<gene>
    <name evidence="1" type="primary">dapE</name>
    <name type="ordered locus">ETA_10720</name>
</gene>